<accession>Q5GXV0</accession>
<organism>
    <name type="scientific">Xanthomonas oryzae pv. oryzae (strain KACC10331 / KXO85)</name>
    <dbReference type="NCBI Taxonomy" id="291331"/>
    <lineage>
        <taxon>Bacteria</taxon>
        <taxon>Pseudomonadati</taxon>
        <taxon>Pseudomonadota</taxon>
        <taxon>Gammaproteobacteria</taxon>
        <taxon>Lysobacterales</taxon>
        <taxon>Lysobacteraceae</taxon>
        <taxon>Xanthomonas</taxon>
    </lineage>
</organism>
<comment type="function">
    <text evidence="1">One of several proteins that assist in the late maturation steps of the functional core of the 30S ribosomal subunit. Associates with free 30S ribosomal subunits (but not with 30S subunits that are part of 70S ribosomes or polysomes). Required for efficient processing of 16S rRNA. May interact with the 5'-terminal helix region of 16S rRNA.</text>
</comment>
<comment type="subunit">
    <text evidence="1">Monomer. Binds 30S ribosomal subunits, but not 50S ribosomal subunits or 70S ribosomes.</text>
</comment>
<comment type="subcellular location">
    <subcellularLocation>
        <location evidence="1">Cytoplasm</location>
    </subcellularLocation>
</comment>
<comment type="similarity">
    <text evidence="1">Belongs to the RbfA family.</text>
</comment>
<sequence length="130" mass="14448">MATKSFHRTDRVSAQVRRDLGTIVHAAVRDHGLPSVSVSDVEISRDLAHAKVFVTALQQERSAEAVKGLKDIAGQLRTQLARAMKLRHVPELHFHYDDSVDRGERIDNLLRDLDDVGPGATSSDEDAEQR</sequence>
<evidence type="ECO:0000255" key="1">
    <source>
        <dbReference type="HAMAP-Rule" id="MF_00003"/>
    </source>
</evidence>
<evidence type="ECO:0000256" key="2">
    <source>
        <dbReference type="SAM" id="MobiDB-lite"/>
    </source>
</evidence>
<reference key="1">
    <citation type="journal article" date="2005" name="Nucleic Acids Res.">
        <title>The genome sequence of Xanthomonas oryzae pathovar oryzae KACC10331, the bacterial blight pathogen of rice.</title>
        <authorList>
            <person name="Lee B.-M."/>
            <person name="Park Y.-J."/>
            <person name="Park D.-S."/>
            <person name="Kang H.-W."/>
            <person name="Kim J.-G."/>
            <person name="Song E.-S."/>
            <person name="Park I.-C."/>
            <person name="Yoon U.-H."/>
            <person name="Hahn J.-H."/>
            <person name="Koo B.-S."/>
            <person name="Lee G.-B."/>
            <person name="Kim H."/>
            <person name="Park H.-S."/>
            <person name="Yoon K.-O."/>
            <person name="Kim J.-H."/>
            <person name="Jung C.-H."/>
            <person name="Koh N.-H."/>
            <person name="Seo J.-S."/>
            <person name="Go S.-J."/>
        </authorList>
    </citation>
    <scope>NUCLEOTIDE SEQUENCE [LARGE SCALE GENOMIC DNA]</scope>
    <source>
        <strain>KACC10331 / KXO85</strain>
    </source>
</reference>
<dbReference type="EMBL" id="AE013598">
    <property type="protein sequence ID" value="AAW76471.1"/>
    <property type="molecule type" value="Genomic_DNA"/>
</dbReference>
<dbReference type="SMR" id="Q5GXV0"/>
<dbReference type="STRING" id="291331.XOO3217"/>
<dbReference type="KEGG" id="xoo:XOO3217"/>
<dbReference type="HOGENOM" id="CLU_089475_6_3_6"/>
<dbReference type="Proteomes" id="UP000006735">
    <property type="component" value="Chromosome"/>
</dbReference>
<dbReference type="GO" id="GO:0005829">
    <property type="term" value="C:cytosol"/>
    <property type="evidence" value="ECO:0007669"/>
    <property type="project" value="TreeGrafter"/>
</dbReference>
<dbReference type="GO" id="GO:0043024">
    <property type="term" value="F:ribosomal small subunit binding"/>
    <property type="evidence" value="ECO:0007669"/>
    <property type="project" value="TreeGrafter"/>
</dbReference>
<dbReference type="GO" id="GO:0030490">
    <property type="term" value="P:maturation of SSU-rRNA"/>
    <property type="evidence" value="ECO:0007669"/>
    <property type="project" value="UniProtKB-UniRule"/>
</dbReference>
<dbReference type="Gene3D" id="3.30.300.20">
    <property type="match status" value="1"/>
</dbReference>
<dbReference type="HAMAP" id="MF_00003">
    <property type="entry name" value="RbfA"/>
    <property type="match status" value="1"/>
</dbReference>
<dbReference type="InterPro" id="IPR015946">
    <property type="entry name" value="KH_dom-like_a/b"/>
</dbReference>
<dbReference type="InterPro" id="IPR000238">
    <property type="entry name" value="RbfA"/>
</dbReference>
<dbReference type="InterPro" id="IPR023799">
    <property type="entry name" value="RbfA_dom_sf"/>
</dbReference>
<dbReference type="InterPro" id="IPR020053">
    <property type="entry name" value="Ribosome-bd_factorA_CS"/>
</dbReference>
<dbReference type="NCBIfam" id="TIGR00082">
    <property type="entry name" value="rbfA"/>
    <property type="match status" value="1"/>
</dbReference>
<dbReference type="PANTHER" id="PTHR33515">
    <property type="entry name" value="RIBOSOME-BINDING FACTOR A, CHLOROPLASTIC-RELATED"/>
    <property type="match status" value="1"/>
</dbReference>
<dbReference type="PANTHER" id="PTHR33515:SF1">
    <property type="entry name" value="RIBOSOME-BINDING FACTOR A, CHLOROPLASTIC-RELATED"/>
    <property type="match status" value="1"/>
</dbReference>
<dbReference type="Pfam" id="PF02033">
    <property type="entry name" value="RBFA"/>
    <property type="match status" value="1"/>
</dbReference>
<dbReference type="SUPFAM" id="SSF89919">
    <property type="entry name" value="Ribosome-binding factor A, RbfA"/>
    <property type="match status" value="1"/>
</dbReference>
<dbReference type="PROSITE" id="PS01319">
    <property type="entry name" value="RBFA"/>
    <property type="match status" value="1"/>
</dbReference>
<name>RBFA_XANOR</name>
<proteinExistence type="inferred from homology"/>
<protein>
    <recommendedName>
        <fullName evidence="1">Ribosome-binding factor A</fullName>
    </recommendedName>
</protein>
<feature type="chain" id="PRO_0000102774" description="Ribosome-binding factor A">
    <location>
        <begin position="1"/>
        <end position="130"/>
    </location>
</feature>
<feature type="region of interest" description="Disordered" evidence="2">
    <location>
        <begin position="111"/>
        <end position="130"/>
    </location>
</feature>
<gene>
    <name evidence="1" type="primary">rbfA</name>
    <name type="ordered locus">XOO3217</name>
</gene>
<keyword id="KW-0963">Cytoplasm</keyword>
<keyword id="KW-1185">Reference proteome</keyword>
<keyword id="KW-0690">Ribosome biogenesis</keyword>